<proteinExistence type="inferred from homology"/>
<feature type="signal peptide" evidence="2">
    <location>
        <begin position="1"/>
        <end position="21"/>
    </location>
</feature>
<feature type="chain" id="PRO_5000316297" description="Alpha-1,3-galactosidase A">
    <location>
        <begin position="22"/>
        <end position="608"/>
    </location>
</feature>
<feature type="repeat" description="PbH1 1">
    <location>
        <begin position="262"/>
        <end position="292"/>
    </location>
</feature>
<feature type="repeat" description="PbH1 2">
    <location>
        <begin position="318"/>
        <end position="340"/>
    </location>
</feature>
<feature type="repeat" description="PbH1 3">
    <location>
        <begin position="426"/>
        <end position="448"/>
    </location>
</feature>
<feature type="repeat" description="PbH1 4">
    <location>
        <begin position="449"/>
        <end position="470"/>
    </location>
</feature>
<feature type="repeat" description="PbH1 5">
    <location>
        <begin position="481"/>
        <end position="507"/>
    </location>
</feature>
<feature type="lipid moiety-binding region" description="N-palmitoyl cysteine" evidence="2">
    <location>
        <position position="22"/>
    </location>
</feature>
<feature type="lipid moiety-binding region" description="S-diacylglycerol cysteine" evidence="2">
    <location>
        <position position="22"/>
    </location>
</feature>
<dbReference type="EC" id="3.2.1.n1"/>
<dbReference type="EC" id="3.2.1.22"/>
<dbReference type="EMBL" id="CP000961">
    <property type="protein sequence ID" value="ACA87918.1"/>
    <property type="molecule type" value="Genomic_DNA"/>
</dbReference>
<dbReference type="RefSeq" id="WP_012326251.1">
    <property type="nucleotide sequence ID" value="NC_010506.1"/>
</dbReference>
<dbReference type="SMR" id="B1KD83"/>
<dbReference type="STRING" id="392500.Swoo_3656"/>
<dbReference type="CAZy" id="GH110">
    <property type="family name" value="Glycoside Hydrolase Family 110"/>
</dbReference>
<dbReference type="KEGG" id="swd:Swoo_3656"/>
<dbReference type="eggNOG" id="COG5434">
    <property type="taxonomic scope" value="Bacteria"/>
</dbReference>
<dbReference type="HOGENOM" id="CLU_017693_0_0_6"/>
<dbReference type="Proteomes" id="UP000002168">
    <property type="component" value="Chromosome"/>
</dbReference>
<dbReference type="GO" id="GO:0005886">
    <property type="term" value="C:plasma membrane"/>
    <property type="evidence" value="ECO:0007669"/>
    <property type="project" value="UniProtKB-SubCell"/>
</dbReference>
<dbReference type="GO" id="GO:0004557">
    <property type="term" value="F:alpha-galactosidase activity"/>
    <property type="evidence" value="ECO:0007669"/>
    <property type="project" value="UniProtKB-EC"/>
</dbReference>
<dbReference type="Gene3D" id="2.160.20.10">
    <property type="entry name" value="Single-stranded right-handed beta-helix, Pectin lyase-like"/>
    <property type="match status" value="2"/>
</dbReference>
<dbReference type="InterPro" id="IPR056441">
    <property type="entry name" value="Beta-barrel_GLAA-B_II"/>
</dbReference>
<dbReference type="InterPro" id="IPR039448">
    <property type="entry name" value="Beta_helix"/>
</dbReference>
<dbReference type="InterPro" id="IPR006626">
    <property type="entry name" value="PbH1"/>
</dbReference>
<dbReference type="InterPro" id="IPR012334">
    <property type="entry name" value="Pectin_lyas_fold"/>
</dbReference>
<dbReference type="InterPro" id="IPR011050">
    <property type="entry name" value="Pectin_lyase_fold/virulence"/>
</dbReference>
<dbReference type="Pfam" id="PF23763">
    <property type="entry name" value="Beta-barrel_GLAA-B_I"/>
    <property type="match status" value="1"/>
</dbReference>
<dbReference type="Pfam" id="PF23764">
    <property type="entry name" value="Beta-barrel_GLAA-B_II"/>
    <property type="match status" value="1"/>
</dbReference>
<dbReference type="Pfam" id="PF13229">
    <property type="entry name" value="Beta_helix"/>
    <property type="match status" value="1"/>
</dbReference>
<dbReference type="SMART" id="SM00710">
    <property type="entry name" value="PbH1"/>
    <property type="match status" value="5"/>
</dbReference>
<dbReference type="SUPFAM" id="SSF51126">
    <property type="entry name" value="Pectin lyase-like"/>
    <property type="match status" value="1"/>
</dbReference>
<dbReference type="PROSITE" id="PS51257">
    <property type="entry name" value="PROKAR_LIPOPROTEIN"/>
    <property type="match status" value="1"/>
</dbReference>
<evidence type="ECO:0000250" key="1"/>
<evidence type="ECO:0000255" key="2">
    <source>
        <dbReference type="PROSITE-ProRule" id="PRU00303"/>
    </source>
</evidence>
<evidence type="ECO:0000305" key="3"/>
<reference key="1">
    <citation type="submission" date="2008-02" db="EMBL/GenBank/DDBJ databases">
        <title>Complete sequence of Shewanella woodyi ATCC 51908.</title>
        <authorList>
            <consortium name="US DOE Joint Genome Institute"/>
            <person name="Copeland A."/>
            <person name="Lucas S."/>
            <person name="Lapidus A."/>
            <person name="Glavina del Rio T."/>
            <person name="Dalin E."/>
            <person name="Tice H."/>
            <person name="Bruce D."/>
            <person name="Goodwin L."/>
            <person name="Pitluck S."/>
            <person name="Sims D."/>
            <person name="Brettin T."/>
            <person name="Detter J.C."/>
            <person name="Han C."/>
            <person name="Kuske C.R."/>
            <person name="Schmutz J."/>
            <person name="Larimer F."/>
            <person name="Land M."/>
            <person name="Hauser L."/>
            <person name="Kyrpides N."/>
            <person name="Lykidis A."/>
            <person name="Zhao J.-S."/>
            <person name="Richardson P."/>
        </authorList>
    </citation>
    <scope>NUCLEOTIDE SEQUENCE [LARGE SCALE GENOMIC DNA]</scope>
    <source>
        <strain>ATCC 51908 / MS32</strain>
    </source>
</reference>
<name>GLAA_SHEWM</name>
<keyword id="KW-1003">Cell membrane</keyword>
<keyword id="KW-0326">Glycosidase</keyword>
<keyword id="KW-0378">Hydrolase</keyword>
<keyword id="KW-0449">Lipoprotein</keyword>
<keyword id="KW-0472">Membrane</keyword>
<keyword id="KW-0564">Palmitate</keyword>
<keyword id="KW-1185">Reference proteome</keyword>
<keyword id="KW-0677">Repeat</keyword>
<keyword id="KW-0732">Signal</keyword>
<comment type="function">
    <text evidence="1">Alpha-galactosidase that specifically removes branched alpha-1,3-linked galactose residues present in blood group B antigens. Has no activity toward linear alpha-1,3-linked galactose residues (By similarity).</text>
</comment>
<comment type="catalytic activity">
    <reaction>
        <text>Hydrolysis of terminal, non-reducing branched (1-&gt;3)-alpha-D-galactosidic residues, producing free D-galactose.</text>
        <dbReference type="EC" id="3.2.1.n1"/>
    </reaction>
</comment>
<comment type="catalytic activity">
    <reaction>
        <text>Hydrolysis of terminal, non-reducing alpha-D-galactose residues in alpha-D-galactosides, including galactose oligosaccharides, galactomannans and galactolipids.</text>
        <dbReference type="EC" id="3.2.1.22"/>
    </reaction>
</comment>
<comment type="subcellular location">
    <subcellularLocation>
        <location evidence="2">Cell membrane</location>
        <topology evidence="2">Lipid-anchor</topology>
    </subcellularLocation>
</comment>
<comment type="similarity">
    <text evidence="3">Belongs to the glycosyl hydrolase 110 family. A subfamily.</text>
</comment>
<protein>
    <recommendedName>
        <fullName>Alpha-1,3-galactosidase A</fullName>
        <ecNumber>3.2.1.n1</ecNumber>
    </recommendedName>
    <alternativeName>
        <fullName>Exo-alpha-galactosidase A</fullName>
        <ecNumber>3.2.1.22</ecNumber>
    </alternativeName>
</protein>
<organism>
    <name type="scientific">Shewanella woodyi (strain ATCC 51908 / MS32)</name>
    <dbReference type="NCBI Taxonomy" id="392500"/>
    <lineage>
        <taxon>Bacteria</taxon>
        <taxon>Pseudomonadati</taxon>
        <taxon>Pseudomonadota</taxon>
        <taxon>Gammaproteobacteria</taxon>
        <taxon>Alteromonadales</taxon>
        <taxon>Shewanellaceae</taxon>
        <taxon>Shewanella</taxon>
    </lineage>
</organism>
<accession>B1KD83</accession>
<gene>
    <name type="primary">glaA</name>
    <name type="ordered locus">Swoo_3656</name>
</gene>
<sequence>MQRRTFIKSISAMMATSTTLGCVSNSLATEKHVSITDFGLRPNSGDDAIPALQKALAYCKKHPGTSLIFPLGRYDFWSTKADRDFYYISNNDDGIKPVAFPLTEFKNLIIDGQGSRFVFHGGMVPVIVRESSGITLKNFSVDWDVPFHCEGIVEAVNKKESYVDLKIKDGFSYKVENGRFIFVGEGFENPVIKNLLEFDTKRQKQAYMARDNFQREIQPVTTEIRPGVLRLQGKYPTWPKVGNTLLLMQERRDWPAFSVQDTKNTWLENIDIHHSGAMGVIAQLADGIKLDNVNIHPKDGSGRTVSTTVDATHFINCKGHVVLKDCLFQGQIDDGTNVHGMYARVAEIHDSNTITFELVHYQQLGIDIFKPGSKVNFSDSVLNVFHDNVVDKTVRQDAKYWTVSFKEPLDTALKVDDVLDNMTWQPDHVMISGCRFTGNRARGALLTVSGKIIVENNYFSTPMMAIKIGSGGLKWYESGPVESVEIRNNIFDNCNYAKDSSAIDIVPGRKSKATTPYHQNVKIYQNEFRVYNERVLTTSRTQGISFVSNKIVKTSEYPERKSAFAPIHVERSSNFVYQGNDFIGFGHSELLFIDGQLVSGSGKLEGEG</sequence>